<proteinExistence type="evidence at protein level"/>
<gene>
    <name evidence="17" type="primary">PSMB2</name>
</gene>
<sequence length="201" mass="22836">MEYLIGIQGPDYVLVASDRVAASNIVQMKDDHDKMFKMSEKILLLCVGEAGDTVQFAEYIQKNVQLYKMRNGYELSPTAAANFTRRNLADCLRSRTPYHVNLLLAGYDEHEGPALYYMDYLAALAKAPFAAHGYGAFLTLSILDRYYTPTISRERAVELLRKCLEELQKRFILNLPTFSVRIIDKNGIHDLDNISFPKQGS</sequence>
<comment type="function">
    <text evidence="4 9 14">Non-catalytic component of the 20S core proteasome complex involved in the proteolytic degradation of most intracellular proteins. This complex plays numerous essential roles within the cell by associating with different regulatory particles. Associated with two 19S regulatory particles, forms the 26S proteasome and thus participates in the ATP-dependent degradation of ubiquitinated proteins. The 26S proteasome plays a key role in the maintenance of protein homeostasis by removing misfolded or damaged proteins that could impair cellular functions, and by removing proteins whose functions are no longer required. Associated with the PA200 or PA28, the 20S proteasome mediates ubiquitin-independent protein degradation. This type of proteolysis is required in several pathways including spermatogenesis (20S-PA200 complex) or generation of a subset of MHC class I-presented antigenic peptides (20S-PA28 complex).</text>
</comment>
<comment type="subunit">
    <text evidence="6 7 8 10 11 12 13">The 26S proteasome consists of a 20S proteasome core and two 19S regulatory subunits. The 20S proteasome core is a barrel-shaped complex made of 28 subunits that are arranged in four stacked rings. The two outer rings are each formed by seven alpha subunits, and the two inner rings are formed by seven beta subunits. The proteolytic activity is exerted by three beta-subunits PSMB5, PSMB6 and PSMB7.</text>
</comment>
<comment type="subunit">
    <text evidence="3">(Microbial infection) Interacts with HIV-1 protein Tat.</text>
</comment>
<comment type="interaction">
    <interactant intactId="EBI-359335">
        <id>P49721</id>
    </interactant>
    <interactant intactId="EBI-4400025">
        <id>Q9Y2T1</id>
        <label>AXIN2</label>
    </interactant>
    <organismsDiffer>false</organismsDiffer>
    <experiments>3</experiments>
</comment>
<comment type="interaction">
    <interactant intactId="EBI-359335">
        <id>P49721</id>
    </interactant>
    <interactant intactId="EBI-466029">
        <id>P42858</id>
        <label>HTT</label>
    </interactant>
    <organismsDiffer>false</organismsDiffer>
    <experiments>7</experiments>
</comment>
<comment type="interaction">
    <interactant intactId="EBI-359335">
        <id>P49721</id>
    </interactant>
    <interactant intactId="EBI-6509505">
        <id>Q0VD86</id>
        <label>INCA1</label>
    </interactant>
    <organismsDiffer>false</organismsDiffer>
    <experiments>3</experiments>
</comment>
<comment type="interaction">
    <interactant intactId="EBI-359335">
        <id>P49721</id>
    </interactant>
    <interactant intactId="EBI-4397613">
        <id>Q7L273</id>
        <label>KCTD9</label>
    </interactant>
    <organismsDiffer>false</organismsDiffer>
    <experiments>3</experiments>
</comment>
<comment type="interaction">
    <interactant intactId="EBI-359335">
        <id>P49721</id>
    </interactant>
    <interactant intactId="EBI-10171552">
        <id>A1A4E9</id>
        <label>KRT13</label>
    </interactant>
    <organismsDiffer>false</organismsDiffer>
    <experiments>3</experiments>
</comment>
<comment type="interaction">
    <interactant intactId="EBI-359335">
        <id>P49721</id>
    </interactant>
    <interactant intactId="EBI-12811111">
        <id>Q8IUB9</id>
        <label>KRTAP19-1</label>
    </interactant>
    <organismsDiffer>false</organismsDiffer>
    <experiments>3</experiments>
</comment>
<comment type="interaction">
    <interactant intactId="EBI-359335">
        <id>P49721</id>
    </interactant>
    <interactant intactId="EBI-1048945">
        <id>Q3LI72</id>
        <label>KRTAP19-5</label>
    </interactant>
    <organismsDiffer>false</organismsDiffer>
    <experiments>3</experiments>
</comment>
<comment type="interaction">
    <interactant intactId="EBI-359335">
        <id>P49721</id>
    </interactant>
    <interactant intactId="EBI-12805508">
        <id>Q3LI70</id>
        <label>KRTAP19-6</label>
    </interactant>
    <organismsDiffer>false</organismsDiffer>
    <experiments>3</experiments>
</comment>
<comment type="interaction">
    <interactant intactId="EBI-359335">
        <id>P49721</id>
    </interactant>
    <interactant intactId="EBI-10241353">
        <id>Q3SYF9</id>
        <label>KRTAP19-7</label>
    </interactant>
    <organismsDiffer>false</organismsDiffer>
    <experiments>3</experiments>
</comment>
<comment type="interaction">
    <interactant intactId="EBI-359335">
        <id>P49721</id>
    </interactant>
    <interactant intactId="EBI-696895">
        <id>Q9Y244</id>
        <label>POMP</label>
    </interactant>
    <organismsDiffer>false</organismsDiffer>
    <experiments>5</experiments>
</comment>
<comment type="interaction">
    <interactant intactId="EBI-359335">
        <id>P49721</id>
    </interactant>
    <interactant intactId="EBI-359352">
        <id>P25786</id>
        <label>PSMA1</label>
    </interactant>
    <organismsDiffer>false</organismsDiffer>
    <experiments>15</experiments>
</comment>
<comment type="interaction">
    <interactant intactId="EBI-359335">
        <id>P49721</id>
    </interactant>
    <interactant intactId="EBI-372273">
        <id>P20618</id>
        <label>PSMB1</label>
    </interactant>
    <organismsDiffer>false</organismsDiffer>
    <experiments>8</experiments>
</comment>
<comment type="interaction">
    <interactant intactId="EBI-359335">
        <id>P49721</id>
    </interactant>
    <interactant intactId="EBI-603340">
        <id>P49720</id>
        <label>PSMB3</label>
    </interactant>
    <organismsDiffer>false</organismsDiffer>
    <experiments>9</experiments>
</comment>
<comment type="interaction">
    <interactant intactId="EBI-359335">
        <id>P49721</id>
    </interactant>
    <interactant intactId="EBI-357828">
        <id>P28074</id>
        <label>PSMB5</label>
    </interactant>
    <organismsDiffer>false</organismsDiffer>
    <experiments>5</experiments>
</comment>
<comment type="subcellular location">
    <subcellularLocation>
        <location evidence="2 13">Cytoplasm</location>
    </subcellularLocation>
    <subcellularLocation>
        <location evidence="2 13">Nucleus</location>
    </subcellularLocation>
    <text evidence="13">Translocated from the cytoplasm into the nucleus following interaction with AKIRIN2, which bridges the proteasome with the nuclear import receptor IPO9.</text>
</comment>
<comment type="induction">
    <text evidence="5">Up-regulated in ovarian cancer cell lines.</text>
</comment>
<comment type="similarity">
    <text evidence="1">Belongs to the peptidase T1B family.</text>
</comment>
<protein>
    <recommendedName>
        <fullName evidence="16">Proteasome subunit beta type-2</fullName>
    </recommendedName>
    <alternativeName>
        <fullName>Macropain subunit C7-I</fullName>
    </alternativeName>
    <alternativeName>
        <fullName>Multicatalytic endopeptidase complex subunit C7-I</fullName>
    </alternativeName>
    <alternativeName>
        <fullName>Proteasome component C7-I</fullName>
    </alternativeName>
    <alternativeName>
        <fullName evidence="15">Proteasome subunit beta-4</fullName>
        <shortName evidence="15">beta-4</shortName>
    </alternativeName>
</protein>
<organism>
    <name type="scientific">Homo sapiens</name>
    <name type="common">Human</name>
    <dbReference type="NCBI Taxonomy" id="9606"/>
    <lineage>
        <taxon>Eukaryota</taxon>
        <taxon>Metazoa</taxon>
        <taxon>Chordata</taxon>
        <taxon>Craniata</taxon>
        <taxon>Vertebrata</taxon>
        <taxon>Euteleostomi</taxon>
        <taxon>Mammalia</taxon>
        <taxon>Eutheria</taxon>
        <taxon>Euarchontoglires</taxon>
        <taxon>Primates</taxon>
        <taxon>Haplorrhini</taxon>
        <taxon>Catarrhini</taxon>
        <taxon>Hominidae</taxon>
        <taxon>Homo</taxon>
    </lineage>
</organism>
<reference key="1">
    <citation type="journal article" date="1994" name="Biochim. Biophys. Acta">
        <title>Sequence analyses and inter-species comparisons of three novel human proteasomal subunits, HsN3, HsC7-I and HsC10-II, confine potential proteolytic active-site residues.</title>
        <authorList>
            <person name="Nothwang H.G."/>
            <person name="Tamura T."/>
            <person name="Tanaka K."/>
            <person name="Ichihara A."/>
        </authorList>
    </citation>
    <scope>NUCLEOTIDE SEQUENCE [MRNA]</scope>
</reference>
<reference key="2">
    <citation type="submission" date="2004-06" db="EMBL/GenBank/DDBJ databases">
        <title>Cloning of human full open reading frames in Gateway(TM) system entry vector (pDONR201).</title>
        <authorList>
            <person name="Ebert L."/>
            <person name="Schick M."/>
            <person name="Neubert P."/>
            <person name="Schatten R."/>
            <person name="Henze S."/>
            <person name="Korn B."/>
        </authorList>
    </citation>
    <scope>NUCLEOTIDE SEQUENCE [LARGE SCALE MRNA]</scope>
</reference>
<reference key="3">
    <citation type="submission" date="2004-10" db="EMBL/GenBank/DDBJ databases">
        <title>Cloning of human full-length CDSs in BD Creator(TM) system donor vector.</title>
        <authorList>
            <person name="Kalnine N."/>
            <person name="Chen X."/>
            <person name="Rolfs A."/>
            <person name="Halleck A."/>
            <person name="Hines L."/>
            <person name="Eisenstein S."/>
            <person name="Koundinya M."/>
            <person name="Raphael J."/>
            <person name="Moreira D."/>
            <person name="Kelley T."/>
            <person name="LaBaer J."/>
            <person name="Lin Y."/>
            <person name="Phelan M."/>
            <person name="Farmer A."/>
        </authorList>
    </citation>
    <scope>NUCLEOTIDE SEQUENCE [LARGE SCALE MRNA]</scope>
</reference>
<reference key="4">
    <citation type="journal article" date="2006" name="Nature">
        <title>The DNA sequence and biological annotation of human chromosome 1.</title>
        <authorList>
            <person name="Gregory S.G."/>
            <person name="Barlow K.F."/>
            <person name="McLay K.E."/>
            <person name="Kaul R."/>
            <person name="Swarbreck D."/>
            <person name="Dunham A."/>
            <person name="Scott C.E."/>
            <person name="Howe K.L."/>
            <person name="Woodfine K."/>
            <person name="Spencer C.C.A."/>
            <person name="Jones M.C."/>
            <person name="Gillson C."/>
            <person name="Searle S."/>
            <person name="Zhou Y."/>
            <person name="Kokocinski F."/>
            <person name="McDonald L."/>
            <person name="Evans R."/>
            <person name="Phillips K."/>
            <person name="Atkinson A."/>
            <person name="Cooper R."/>
            <person name="Jones C."/>
            <person name="Hall R.E."/>
            <person name="Andrews T.D."/>
            <person name="Lloyd C."/>
            <person name="Ainscough R."/>
            <person name="Almeida J.P."/>
            <person name="Ambrose K.D."/>
            <person name="Anderson F."/>
            <person name="Andrew R.W."/>
            <person name="Ashwell R.I.S."/>
            <person name="Aubin K."/>
            <person name="Babbage A.K."/>
            <person name="Bagguley C.L."/>
            <person name="Bailey J."/>
            <person name="Beasley H."/>
            <person name="Bethel G."/>
            <person name="Bird C.P."/>
            <person name="Bray-Allen S."/>
            <person name="Brown J.Y."/>
            <person name="Brown A.J."/>
            <person name="Buckley D."/>
            <person name="Burton J."/>
            <person name="Bye J."/>
            <person name="Carder C."/>
            <person name="Chapman J.C."/>
            <person name="Clark S.Y."/>
            <person name="Clarke G."/>
            <person name="Clee C."/>
            <person name="Cobley V."/>
            <person name="Collier R.E."/>
            <person name="Corby N."/>
            <person name="Coville G.J."/>
            <person name="Davies J."/>
            <person name="Deadman R."/>
            <person name="Dunn M."/>
            <person name="Earthrowl M."/>
            <person name="Ellington A.G."/>
            <person name="Errington H."/>
            <person name="Frankish A."/>
            <person name="Frankland J."/>
            <person name="French L."/>
            <person name="Garner P."/>
            <person name="Garnett J."/>
            <person name="Gay L."/>
            <person name="Ghori M.R.J."/>
            <person name="Gibson R."/>
            <person name="Gilby L.M."/>
            <person name="Gillett W."/>
            <person name="Glithero R.J."/>
            <person name="Grafham D.V."/>
            <person name="Griffiths C."/>
            <person name="Griffiths-Jones S."/>
            <person name="Grocock R."/>
            <person name="Hammond S."/>
            <person name="Harrison E.S.I."/>
            <person name="Hart E."/>
            <person name="Haugen E."/>
            <person name="Heath P.D."/>
            <person name="Holmes S."/>
            <person name="Holt K."/>
            <person name="Howden P.J."/>
            <person name="Hunt A.R."/>
            <person name="Hunt S.E."/>
            <person name="Hunter G."/>
            <person name="Isherwood J."/>
            <person name="James R."/>
            <person name="Johnson C."/>
            <person name="Johnson D."/>
            <person name="Joy A."/>
            <person name="Kay M."/>
            <person name="Kershaw J.K."/>
            <person name="Kibukawa M."/>
            <person name="Kimberley A.M."/>
            <person name="King A."/>
            <person name="Knights A.J."/>
            <person name="Lad H."/>
            <person name="Laird G."/>
            <person name="Lawlor S."/>
            <person name="Leongamornlert D.A."/>
            <person name="Lloyd D.M."/>
            <person name="Loveland J."/>
            <person name="Lovell J."/>
            <person name="Lush M.J."/>
            <person name="Lyne R."/>
            <person name="Martin S."/>
            <person name="Mashreghi-Mohammadi M."/>
            <person name="Matthews L."/>
            <person name="Matthews N.S.W."/>
            <person name="McLaren S."/>
            <person name="Milne S."/>
            <person name="Mistry S."/>
            <person name="Moore M.J.F."/>
            <person name="Nickerson T."/>
            <person name="O'Dell C.N."/>
            <person name="Oliver K."/>
            <person name="Palmeiri A."/>
            <person name="Palmer S.A."/>
            <person name="Parker A."/>
            <person name="Patel D."/>
            <person name="Pearce A.V."/>
            <person name="Peck A.I."/>
            <person name="Pelan S."/>
            <person name="Phelps K."/>
            <person name="Phillimore B.J."/>
            <person name="Plumb R."/>
            <person name="Rajan J."/>
            <person name="Raymond C."/>
            <person name="Rouse G."/>
            <person name="Saenphimmachak C."/>
            <person name="Sehra H.K."/>
            <person name="Sheridan E."/>
            <person name="Shownkeen R."/>
            <person name="Sims S."/>
            <person name="Skuce C.D."/>
            <person name="Smith M."/>
            <person name="Steward C."/>
            <person name="Subramanian S."/>
            <person name="Sycamore N."/>
            <person name="Tracey A."/>
            <person name="Tromans A."/>
            <person name="Van Helmond Z."/>
            <person name="Wall M."/>
            <person name="Wallis J.M."/>
            <person name="White S."/>
            <person name="Whitehead S.L."/>
            <person name="Wilkinson J.E."/>
            <person name="Willey D.L."/>
            <person name="Williams H."/>
            <person name="Wilming L."/>
            <person name="Wray P.W."/>
            <person name="Wu Z."/>
            <person name="Coulson A."/>
            <person name="Vaudin M."/>
            <person name="Sulston J.E."/>
            <person name="Durbin R.M."/>
            <person name="Hubbard T."/>
            <person name="Wooster R."/>
            <person name="Dunham I."/>
            <person name="Carter N.P."/>
            <person name="McVean G."/>
            <person name="Ross M.T."/>
            <person name="Harrow J."/>
            <person name="Olson M.V."/>
            <person name="Beck S."/>
            <person name="Rogers J."/>
            <person name="Bentley D.R."/>
        </authorList>
    </citation>
    <scope>NUCLEOTIDE SEQUENCE [LARGE SCALE GENOMIC DNA]</scope>
</reference>
<reference key="5">
    <citation type="submission" date="2005-09" db="EMBL/GenBank/DDBJ databases">
        <authorList>
            <person name="Mural R.J."/>
            <person name="Istrail S."/>
            <person name="Sutton G.G."/>
            <person name="Florea L."/>
            <person name="Halpern A.L."/>
            <person name="Mobarry C.M."/>
            <person name="Lippert R."/>
            <person name="Walenz B."/>
            <person name="Shatkay H."/>
            <person name="Dew I."/>
            <person name="Miller J.R."/>
            <person name="Flanigan M.J."/>
            <person name="Edwards N.J."/>
            <person name="Bolanos R."/>
            <person name="Fasulo D."/>
            <person name="Halldorsson B.V."/>
            <person name="Hannenhalli S."/>
            <person name="Turner R."/>
            <person name="Yooseph S."/>
            <person name="Lu F."/>
            <person name="Nusskern D.R."/>
            <person name="Shue B.C."/>
            <person name="Zheng X.H."/>
            <person name="Zhong F."/>
            <person name="Delcher A.L."/>
            <person name="Huson D.H."/>
            <person name="Kravitz S.A."/>
            <person name="Mouchard L."/>
            <person name="Reinert K."/>
            <person name="Remington K.A."/>
            <person name="Clark A.G."/>
            <person name="Waterman M.S."/>
            <person name="Eichler E.E."/>
            <person name="Adams M.D."/>
            <person name="Hunkapiller M.W."/>
            <person name="Myers E.W."/>
            <person name="Venter J.C."/>
        </authorList>
    </citation>
    <scope>NUCLEOTIDE SEQUENCE [LARGE SCALE GENOMIC DNA]</scope>
</reference>
<reference key="6">
    <citation type="journal article" date="2004" name="Genome Res.">
        <title>The status, quality, and expansion of the NIH full-length cDNA project: the Mammalian Gene Collection (MGC).</title>
        <authorList>
            <consortium name="The MGC Project Team"/>
        </authorList>
    </citation>
    <scope>NUCLEOTIDE SEQUENCE [LARGE SCALE MRNA]</scope>
    <source>
        <tissue>Brain</tissue>
    </source>
</reference>
<reference key="7">
    <citation type="submission" date="2007-03" db="UniProtKB">
        <authorList>
            <person name="Lubec G."/>
            <person name="Vishwanath V."/>
        </authorList>
    </citation>
    <scope>PROTEIN SEQUENCE OF 71-85 AND 171-181</scope>
    <scope>IDENTIFICATION BY MASS SPECTROMETRY</scope>
    <source>
        <tissue>Brain</tissue>
        <tissue>Cajal-Retzius cell</tissue>
    </source>
</reference>
<reference key="8">
    <citation type="journal article" date="1992" name="Electrophoresis">
        <title>Microsequences of 145 proteins recorded in the two-dimensional gel protein database of normal human epidermal keratinocytes.</title>
        <authorList>
            <person name="Rasmussen H.H."/>
            <person name="van Damme J."/>
            <person name="Puype M."/>
            <person name="Gesser B."/>
            <person name="Celis J.E."/>
            <person name="Vandekerckhove J."/>
        </authorList>
    </citation>
    <scope>PROTEIN SEQUENCE OF 172-177 AND 186-193</scope>
    <source>
        <tissue>Keratinocyte</tissue>
    </source>
</reference>
<reference key="9">
    <citation type="journal article" date="1994" name="Biochem. Biophys. Res. Commun.">
        <title>Human proteasome subunits from 2-dimensional gels identified by partial sequencing.</title>
        <authorList>
            <person name="Kristensen P."/>
            <person name="Johnsen A.H."/>
            <person name="Uerkvitz W."/>
            <person name="Tanaka K."/>
            <person name="Hendil K.B."/>
        </authorList>
    </citation>
    <scope>PROTEIN SEQUENCE OF 72-85</scope>
    <source>
        <tissue>Placenta</tissue>
    </source>
</reference>
<reference key="10">
    <citation type="journal article" date="1996" name="Nature">
        <title>A role for the proteasome regulator PA28alpha in antigen presentation.</title>
        <authorList>
            <person name="Groettrup M."/>
            <person name="Soza A."/>
            <person name="Eggers M."/>
            <person name="Kuehn L."/>
            <person name="Dick T.P."/>
            <person name="Schild H."/>
            <person name="Rammensee H.G."/>
            <person name="Koszinowski U.H."/>
            <person name="Kloetzel P.M."/>
        </authorList>
    </citation>
    <scope>FUNCTION IN ANTIGEN PRESENTATION</scope>
</reference>
<reference key="11">
    <citation type="journal article" date="2002" name="Mol. Biol. Cell">
        <title>Clastosome: a subtype of nuclear body enriched in 19S and 20S proteasomes, ubiquitin, and protein substrates of proteasome.</title>
        <authorList>
            <person name="Lafarga M."/>
            <person name="Berciano M.T."/>
            <person name="Pena E."/>
            <person name="Mayo I."/>
            <person name="Castano J.G."/>
            <person name="Bohmann D."/>
            <person name="Rodrigues J.P."/>
            <person name="Tavanez J.P."/>
            <person name="Carmo-Fonseca M."/>
        </authorList>
    </citation>
    <scope>SUBCELLULAR LOCATION</scope>
</reference>
<reference key="12">
    <citation type="journal article" date="2003" name="FEBS Lett.">
        <title>Human immunodeficiency virus-1 Tat protein interacts with distinct proteasomal alpha and beta subunits.</title>
        <authorList>
            <person name="Apcher G.S."/>
            <person name="Heink S."/>
            <person name="Zantopf D."/>
            <person name="Kloetzel P.-M."/>
            <person name="Schmid H.-P."/>
            <person name="Mayer R.J."/>
            <person name="Krueger E."/>
        </authorList>
    </citation>
    <scope>INTERACTION WITH HIV-1 TAT (MICROBIAL INFECTION)</scope>
</reference>
<reference key="13">
    <citation type="journal article" date="2004" name="Biomacromolecules">
        <title>20S proteasome prevents aggregation of heat-denatured proteins without PA700 regulatory subcomplex like a molecular chaperone.</title>
        <authorList>
            <person name="Yano M."/>
            <person name="Koumoto Y."/>
            <person name="Kanesaki Y."/>
            <person name="Wu X."/>
            <person name="Kido H."/>
        </authorList>
    </citation>
    <scope>FUNCTION</scope>
</reference>
<reference key="14">
    <citation type="journal article" date="2007" name="Biochemistry">
        <title>Mass spectrometric characterization of the affinity-purified human 26S proteasome complex.</title>
        <authorList>
            <person name="Wang X."/>
            <person name="Chen C.-F."/>
            <person name="Baker P.R."/>
            <person name="Chen P.-L."/>
            <person name="Kaiser P."/>
            <person name="Huang L."/>
        </authorList>
    </citation>
    <scope>IDENTIFICATION BY MASS SPECTROMETRY [LARGE SCALE ANALYSIS]</scope>
    <source>
        <tissue>Embryonic kidney</tissue>
    </source>
</reference>
<reference key="15">
    <citation type="journal article" date="2009" name="Anal. Chem.">
        <title>Lys-N and trypsin cover complementary parts of the phosphoproteome in a refined SCX-based approach.</title>
        <authorList>
            <person name="Gauci S."/>
            <person name="Helbig A.O."/>
            <person name="Slijper M."/>
            <person name="Krijgsveld J."/>
            <person name="Heck A.J."/>
            <person name="Mohammed S."/>
        </authorList>
    </citation>
    <scope>ACETYLATION [LARGE SCALE ANALYSIS] AT MET-1</scope>
    <scope>IDENTIFICATION BY MASS SPECTROMETRY [LARGE SCALE ANALYSIS]</scope>
</reference>
<reference key="16">
    <citation type="journal article" date="2009" name="Int. J. Oncol.">
        <title>Screening for genetic abnormalities involved in ovarian carcinogenesis using retroviral expression libraries.</title>
        <authorList>
            <person name="Wada T."/>
            <person name="Yamashita Y."/>
            <person name="Saga Y."/>
            <person name="Takahashi K."/>
            <person name="Koinuma K."/>
            <person name="Choi Y.L."/>
            <person name="Kaneda R."/>
            <person name="Fujiwara S."/>
            <person name="Soda M."/>
            <person name="Watanabe H."/>
            <person name="Kurashina K."/>
            <person name="Hatanaka H."/>
            <person name="Enomoto M."/>
            <person name="Takada S."/>
            <person name="Mano H."/>
            <person name="Suzuki M."/>
        </authorList>
    </citation>
    <scope>INDUCTION</scope>
</reference>
<reference key="17">
    <citation type="journal article" date="2010" name="Sci. Signal.">
        <title>Quantitative phosphoproteomics reveals widespread full phosphorylation site occupancy during mitosis.</title>
        <authorList>
            <person name="Olsen J.V."/>
            <person name="Vermeulen M."/>
            <person name="Santamaria A."/>
            <person name="Kumar C."/>
            <person name="Miller M.L."/>
            <person name="Jensen L.J."/>
            <person name="Gnad F."/>
            <person name="Cox J."/>
            <person name="Jensen T.S."/>
            <person name="Nigg E.A."/>
            <person name="Brunak S."/>
            <person name="Mann M."/>
        </authorList>
    </citation>
    <scope>IDENTIFICATION BY MASS SPECTROMETRY [LARGE SCALE ANALYSIS]</scope>
    <source>
        <tissue>Cervix carcinoma</tissue>
    </source>
</reference>
<reference key="18">
    <citation type="journal article" date="2011" name="BMC Syst. Biol.">
        <title>Initial characterization of the human central proteome.</title>
        <authorList>
            <person name="Burkard T.R."/>
            <person name="Planyavsky M."/>
            <person name="Kaupe I."/>
            <person name="Breitwieser F.P."/>
            <person name="Buerckstuemmer T."/>
            <person name="Bennett K.L."/>
            <person name="Superti-Furga G."/>
            <person name="Colinge J."/>
        </authorList>
    </citation>
    <scope>IDENTIFICATION BY MASS SPECTROMETRY [LARGE SCALE ANALYSIS]</scope>
</reference>
<reference key="19">
    <citation type="journal article" date="2012" name="Proc. Natl. Acad. Sci. U.S.A.">
        <title>N-terminal acetylome analyses and functional insights of the N-terminal acetyltransferase NatB.</title>
        <authorList>
            <person name="Van Damme P."/>
            <person name="Lasa M."/>
            <person name="Polevoda B."/>
            <person name="Gazquez C."/>
            <person name="Elosegui-Artola A."/>
            <person name="Kim D.S."/>
            <person name="De Juan-Pardo E."/>
            <person name="Demeyer K."/>
            <person name="Hole K."/>
            <person name="Larrea E."/>
            <person name="Timmerman E."/>
            <person name="Prieto J."/>
            <person name="Arnesen T."/>
            <person name="Sherman F."/>
            <person name="Gevaert K."/>
            <person name="Aldabe R."/>
        </authorList>
    </citation>
    <scope>ACETYLATION [LARGE SCALE ANALYSIS] AT MET-1</scope>
    <scope>IDENTIFICATION BY MASS SPECTROMETRY [LARGE SCALE ANALYSIS]</scope>
</reference>
<reference key="20">
    <citation type="journal article" date="2013" name="Annu. Rev. Biochem.">
        <title>Molecular architecture and assembly of the eukaryotic proteasome.</title>
        <authorList>
            <person name="Tomko R.J. Jr."/>
            <person name="Hochstrasser M."/>
        </authorList>
    </citation>
    <scope>NOMENCLATURE</scope>
</reference>
<reference key="21">
    <citation type="journal article" date="2015" name="Proteomics">
        <title>N-terminome analysis of the human mitochondrial proteome.</title>
        <authorList>
            <person name="Vaca Jacome A.S."/>
            <person name="Rabilloud T."/>
            <person name="Schaeffer-Reiss C."/>
            <person name="Rompais M."/>
            <person name="Ayoub D."/>
            <person name="Lane L."/>
            <person name="Bairoch A."/>
            <person name="Van Dorsselaer A."/>
            <person name="Carapito C."/>
        </authorList>
    </citation>
    <scope>IDENTIFICATION BY MASS SPECTROMETRY [LARGE SCALE ANALYSIS]</scope>
</reference>
<reference key="22">
    <citation type="journal article" date="2016" name="Biol. Chem.">
        <title>Human 20S proteasome activity towards fluorogenic peptides of various chain lengths.</title>
        <authorList>
            <person name="Rut W."/>
            <person name="Drag M."/>
        </authorList>
    </citation>
    <scope>FUNCTION</scope>
</reference>
<reference key="23">
    <citation type="journal article" date="2015" name="Nat. Commun.">
        <title>Cryo-EM reveals the conformation of a substrate analogue in the human 20S proteasome core.</title>
        <authorList>
            <person name="da Fonseca P.C."/>
            <person name="Morris E.P."/>
        </authorList>
    </citation>
    <scope>STRUCTURE BY ELECTRON MICROSCOPY (3.50 ANGSTROMS)</scope>
    <scope>SUBUNIT</scope>
</reference>
<reference key="24">
    <citation type="journal article" date="2015" name="Structure">
        <title>Crystal structure of the human 20S proteasome in complex with carfilzomib.</title>
        <authorList>
            <person name="Harshbarger W."/>
            <person name="Miller C."/>
            <person name="Diedrich C."/>
            <person name="Sacchettini J."/>
        </authorList>
    </citation>
    <scope>X-RAY CRYSTALLOGRAPHY (2.60 ANGSTROMS)</scope>
    <scope>SUBUNIT</scope>
</reference>
<reference key="25">
    <citation type="journal article" date="2016" name="Nat. Struct. Mol. Biol.">
        <title>An atomic structure of the human 26S proteasome.</title>
        <authorList>
            <person name="Huang X."/>
            <person name="Luan B."/>
            <person name="Wu J."/>
            <person name="Shi Y."/>
        </authorList>
    </citation>
    <scope>STRUCTURE BY ELECTRON MICROSCOPY (3.50 ANGSTROMS)</scope>
    <scope>SUBUNIT</scope>
</reference>
<reference key="26">
    <citation type="journal article" date="2016" name="Proc. Natl. Acad. Sci. U.S.A.">
        <title>Structure of the human 26S proteasome at a resolution of 3.9 Aa.</title>
        <authorList>
            <person name="Schweitzer A."/>
            <person name="Aufderheide A."/>
            <person name="Rudack T."/>
            <person name="Beck F."/>
            <person name="Pfeifer G."/>
            <person name="Plitzko J.M."/>
            <person name="Sakata E."/>
            <person name="Schulten K."/>
            <person name="Foerster F."/>
            <person name="Baumeister W."/>
        </authorList>
    </citation>
    <scope>STRUCTURE BY ELECTRON MICROSCOPY (4.02 ANGSTROMS)</scope>
    <scope>SUBUNIT</scope>
</reference>
<reference key="27">
    <citation type="journal article" date="2016" name="Science">
        <title>The inhibition mechanism of human 20S proteasomes enables next-generation inhibitor design.</title>
        <authorList>
            <person name="Schrader J."/>
            <person name="Henneberg F."/>
            <person name="Mata R.A."/>
            <person name="Tittmann K."/>
            <person name="Schneider T.R."/>
            <person name="Stark H."/>
            <person name="Bourenkov G."/>
            <person name="Chari A."/>
        </authorList>
    </citation>
    <scope>X-RAY CRYSTALLOGRAPHY (1.80 ANGSTROMS)</scope>
    <scope>SUBUNIT</scope>
</reference>
<reference key="28">
    <citation type="journal article" date="2015" name="Sci. Rep.">
        <title>Disassembly of the self-assembled, double-ring structure of proteasome alpha7 homo-tetradecamer by alpha6.</title>
        <authorList>
            <person name="Ishii K."/>
            <person name="Noda M."/>
            <person name="Yagi H."/>
            <person name="Thammaporn R."/>
            <person name="Seetaha S."/>
            <person name="Satoh T."/>
            <person name="Kato K."/>
            <person name="Uchiyama S."/>
        </authorList>
    </citation>
    <scope>X-RAY CRYSTALLOGRAPHY (3.75 ANGSTROMS) OF 1-255</scope>
    <scope>SUBUNIT</scope>
</reference>
<reference key="29">
    <citation type="journal article" date="2021" name="Nature">
        <title>AKIRIN2 controls the nuclear import of proteasomes in vertebrates.</title>
        <authorList>
            <person name="de Almeida M."/>
            <person name="Hinterndorfer M."/>
            <person name="Brunner H."/>
            <person name="Grishkovskaya I."/>
            <person name="Singh K."/>
            <person name="Schleiffer A."/>
            <person name="Jude J."/>
            <person name="Deswal S."/>
            <person name="Kalis R."/>
            <person name="Vunjak M."/>
            <person name="Lendl T."/>
            <person name="Imre R."/>
            <person name="Roitinger E."/>
            <person name="Neumann T."/>
            <person name="Kandolf S."/>
            <person name="Schutzbier M."/>
            <person name="Mechtler K."/>
            <person name="Versteeg G.A."/>
            <person name="Haselbach D."/>
            <person name="Zuber J."/>
        </authorList>
    </citation>
    <scope>STRUCTURE BY ELECTRON MICROSCOPY (2.80 ANGSTROMS) IN COMPLEX WITH AKIRIN2</scope>
    <scope>SUBUNIT</scope>
    <scope>SUBCELLULAR LOCATION</scope>
</reference>
<evidence type="ECO:0000255" key="1">
    <source>
        <dbReference type="PROSITE-ProRule" id="PRU00809"/>
    </source>
</evidence>
<evidence type="ECO:0000269" key="2">
    <source>
    </source>
</evidence>
<evidence type="ECO:0000269" key="3">
    <source>
    </source>
</evidence>
<evidence type="ECO:0000269" key="4">
    <source>
    </source>
</evidence>
<evidence type="ECO:0000269" key="5">
    <source>
    </source>
</evidence>
<evidence type="ECO:0000269" key="6">
    <source>
    </source>
</evidence>
<evidence type="ECO:0000269" key="7">
    <source>
    </source>
</evidence>
<evidence type="ECO:0000269" key="8">
    <source>
    </source>
</evidence>
<evidence type="ECO:0000269" key="9">
    <source>
    </source>
</evidence>
<evidence type="ECO:0000269" key="10">
    <source>
    </source>
</evidence>
<evidence type="ECO:0000269" key="11">
    <source>
    </source>
</evidence>
<evidence type="ECO:0000269" key="12">
    <source>
    </source>
</evidence>
<evidence type="ECO:0000269" key="13">
    <source>
    </source>
</evidence>
<evidence type="ECO:0000269" key="14">
    <source>
    </source>
</evidence>
<evidence type="ECO:0000303" key="15">
    <source>
    </source>
</evidence>
<evidence type="ECO:0000305" key="16"/>
<evidence type="ECO:0000312" key="17">
    <source>
        <dbReference type="HGNC" id="HGNC:9539"/>
    </source>
</evidence>
<evidence type="ECO:0007744" key="18">
    <source>
    </source>
</evidence>
<evidence type="ECO:0007744" key="19">
    <source>
    </source>
</evidence>
<evidence type="ECO:0007829" key="20">
    <source>
        <dbReference type="PDB" id="5LE5"/>
    </source>
</evidence>
<evidence type="ECO:0007829" key="21">
    <source>
        <dbReference type="PDB" id="6REY"/>
    </source>
</evidence>
<evidence type="ECO:0007829" key="22">
    <source>
        <dbReference type="PDB" id="8BZL"/>
    </source>
</evidence>
<feature type="chain" id="PRO_0000148043" description="Proteasome subunit beta type-2">
    <location>
        <begin position="1"/>
        <end position="201"/>
    </location>
</feature>
<feature type="modified residue" description="N-acetylmethionine" evidence="18 19">
    <location>
        <position position="1"/>
    </location>
</feature>
<feature type="strand" evidence="20">
    <location>
        <begin position="4"/>
        <end position="8"/>
    </location>
</feature>
<feature type="strand" evidence="20">
    <location>
        <begin position="13"/>
        <end position="18"/>
    </location>
</feature>
<feature type="strand" evidence="20">
    <location>
        <begin position="21"/>
        <end position="23"/>
    </location>
</feature>
<feature type="strand" evidence="20">
    <location>
        <begin position="26"/>
        <end position="31"/>
    </location>
</feature>
<feature type="strand" evidence="20">
    <location>
        <begin position="35"/>
        <end position="39"/>
    </location>
</feature>
<feature type="strand" evidence="20">
    <location>
        <begin position="42"/>
        <end position="49"/>
    </location>
</feature>
<feature type="helix" evidence="20">
    <location>
        <begin position="52"/>
        <end position="71"/>
    </location>
</feature>
<feature type="helix" evidence="20">
    <location>
        <begin position="77"/>
        <end position="89"/>
    </location>
</feature>
<feature type="turn" evidence="22">
    <location>
        <begin position="91"/>
        <end position="93"/>
    </location>
</feature>
<feature type="strand" evidence="20">
    <location>
        <begin position="94"/>
        <end position="96"/>
    </location>
</feature>
<feature type="strand" evidence="20">
    <location>
        <begin position="100"/>
        <end position="108"/>
    </location>
</feature>
<feature type="turn" evidence="20">
    <location>
        <begin position="109"/>
        <end position="111"/>
    </location>
</feature>
<feature type="strand" evidence="20">
    <location>
        <begin position="112"/>
        <end position="118"/>
    </location>
</feature>
<feature type="strand" evidence="20">
    <location>
        <begin position="124"/>
        <end position="126"/>
    </location>
</feature>
<feature type="strand" evidence="20">
    <location>
        <begin position="128"/>
        <end position="133"/>
    </location>
</feature>
<feature type="helix" evidence="20">
    <location>
        <begin position="136"/>
        <end position="146"/>
    </location>
</feature>
<feature type="helix" evidence="20">
    <location>
        <begin position="153"/>
        <end position="170"/>
    </location>
</feature>
<feature type="strand" evidence="20">
    <location>
        <begin position="171"/>
        <end position="173"/>
    </location>
</feature>
<feature type="strand" evidence="20">
    <location>
        <begin position="177"/>
        <end position="184"/>
    </location>
</feature>
<feature type="strand" evidence="20">
    <location>
        <begin position="187"/>
        <end position="190"/>
    </location>
</feature>
<feature type="strand" evidence="21">
    <location>
        <begin position="191"/>
        <end position="195"/>
    </location>
</feature>
<dbReference type="EMBL" id="D26599">
    <property type="protein sequence ID" value="BAA05646.1"/>
    <property type="molecule type" value="mRNA"/>
</dbReference>
<dbReference type="EMBL" id="CR456862">
    <property type="protein sequence ID" value="CAG33143.1"/>
    <property type="molecule type" value="mRNA"/>
</dbReference>
<dbReference type="EMBL" id="BT007137">
    <property type="protein sequence ID" value="AAP35801.1"/>
    <property type="molecule type" value="mRNA"/>
</dbReference>
<dbReference type="EMBL" id="AL354864">
    <property type="status" value="NOT_ANNOTATED_CDS"/>
    <property type="molecule type" value="Genomic_DNA"/>
</dbReference>
<dbReference type="EMBL" id="AL357035">
    <property type="status" value="NOT_ANNOTATED_CDS"/>
    <property type="molecule type" value="Genomic_DNA"/>
</dbReference>
<dbReference type="EMBL" id="AL157951">
    <property type="status" value="NOT_ANNOTATED_CDS"/>
    <property type="molecule type" value="Genomic_DNA"/>
</dbReference>
<dbReference type="EMBL" id="CH471059">
    <property type="protein sequence ID" value="EAX07406.1"/>
    <property type="molecule type" value="Genomic_DNA"/>
</dbReference>
<dbReference type="EMBL" id="CH471059">
    <property type="protein sequence ID" value="EAX07407.1"/>
    <property type="molecule type" value="Genomic_DNA"/>
</dbReference>
<dbReference type="EMBL" id="BC101836">
    <property type="protein sequence ID" value="AAI01837.1"/>
    <property type="molecule type" value="mRNA"/>
</dbReference>
<dbReference type="EMBL" id="BC105126">
    <property type="protein sequence ID" value="AAI05127.1"/>
    <property type="molecule type" value="mRNA"/>
</dbReference>
<dbReference type="EMBL" id="BC107901">
    <property type="protein sequence ID" value="AAI07902.1"/>
    <property type="molecule type" value="mRNA"/>
</dbReference>
<dbReference type="CCDS" id="CCDS394.1"/>
<dbReference type="PIR" id="S55040">
    <property type="entry name" value="S55040"/>
</dbReference>
<dbReference type="RefSeq" id="NP_002785.1">
    <property type="nucleotide sequence ID" value="NM_002794.5"/>
</dbReference>
<dbReference type="PDB" id="4R3O">
    <property type="method" value="X-ray"/>
    <property type="resolution" value="2.60 A"/>
    <property type="chains" value="K/Y=1-199"/>
</dbReference>
<dbReference type="PDB" id="4R67">
    <property type="method" value="X-ray"/>
    <property type="resolution" value="2.89 A"/>
    <property type="chains" value="0/K/Y/m=1-199"/>
</dbReference>
<dbReference type="PDB" id="5A0Q">
    <property type="method" value="EM"/>
    <property type="resolution" value="3.50 A"/>
    <property type="chains" value="K/Y=1-201"/>
</dbReference>
<dbReference type="PDB" id="5GJQ">
    <property type="method" value="EM"/>
    <property type="resolution" value="4.50 A"/>
    <property type="chains" value="d/r=1-201"/>
</dbReference>
<dbReference type="PDB" id="5GJR">
    <property type="method" value="EM"/>
    <property type="resolution" value="3.50 A"/>
    <property type="chains" value="d/r=1-201"/>
</dbReference>
<dbReference type="PDB" id="5L4G">
    <property type="method" value="EM"/>
    <property type="resolution" value="4.02 A"/>
    <property type="chains" value="2/V=1-201"/>
</dbReference>
<dbReference type="PDB" id="5LE5">
    <property type="method" value="X-ray"/>
    <property type="resolution" value="1.80 A"/>
    <property type="chains" value="J/X=1-201"/>
</dbReference>
<dbReference type="PDB" id="5LEX">
    <property type="method" value="X-ray"/>
    <property type="resolution" value="2.20 A"/>
    <property type="chains" value="J/X=1-201"/>
</dbReference>
<dbReference type="PDB" id="5LEY">
    <property type="method" value="X-ray"/>
    <property type="resolution" value="1.90 A"/>
    <property type="chains" value="J/X=1-201"/>
</dbReference>
<dbReference type="PDB" id="5LEZ">
    <property type="method" value="X-ray"/>
    <property type="resolution" value="2.19 A"/>
    <property type="chains" value="J/X=1-201"/>
</dbReference>
<dbReference type="PDB" id="5LF0">
    <property type="method" value="X-ray"/>
    <property type="resolution" value="2.41 A"/>
    <property type="chains" value="J/X=1-201"/>
</dbReference>
<dbReference type="PDB" id="5LF1">
    <property type="method" value="X-ray"/>
    <property type="resolution" value="2.00 A"/>
    <property type="chains" value="J/X=1-201"/>
</dbReference>
<dbReference type="PDB" id="5LF3">
    <property type="method" value="X-ray"/>
    <property type="resolution" value="2.10 A"/>
    <property type="chains" value="J/X=1-201"/>
</dbReference>
<dbReference type="PDB" id="5LF4">
    <property type="method" value="X-ray"/>
    <property type="resolution" value="1.99 A"/>
    <property type="chains" value="J/X=1-201"/>
</dbReference>
<dbReference type="PDB" id="5LF6">
    <property type="method" value="X-ray"/>
    <property type="resolution" value="2.07 A"/>
    <property type="chains" value="J/X=1-201"/>
</dbReference>
<dbReference type="PDB" id="5LF7">
    <property type="method" value="X-ray"/>
    <property type="resolution" value="2.00 A"/>
    <property type="chains" value="J/X=1-201"/>
</dbReference>
<dbReference type="PDB" id="5LN3">
    <property type="method" value="EM"/>
    <property type="resolution" value="6.80 A"/>
    <property type="chains" value="4=1-201"/>
</dbReference>
<dbReference type="PDB" id="5M32">
    <property type="method" value="EM"/>
    <property type="resolution" value="3.80 A"/>
    <property type="chains" value="J/X=1-196"/>
</dbReference>
<dbReference type="PDB" id="5T0C">
    <property type="method" value="EM"/>
    <property type="resolution" value="3.80 A"/>
    <property type="chains" value="AQ/BQ=1-201"/>
</dbReference>
<dbReference type="PDB" id="5T0G">
    <property type="method" value="EM"/>
    <property type="resolution" value="4.40 A"/>
    <property type="chains" value="Q=1-201"/>
</dbReference>
<dbReference type="PDB" id="5T0H">
    <property type="method" value="EM"/>
    <property type="resolution" value="6.80 A"/>
    <property type="chains" value="Q=1-201"/>
</dbReference>
<dbReference type="PDB" id="5T0I">
    <property type="method" value="EM"/>
    <property type="resolution" value="8.00 A"/>
    <property type="chains" value="Q=1-201"/>
</dbReference>
<dbReference type="PDB" id="5T0J">
    <property type="method" value="EM"/>
    <property type="resolution" value="8.00 A"/>
    <property type="chains" value="Q=1-201"/>
</dbReference>
<dbReference type="PDB" id="5VFO">
    <property type="method" value="EM"/>
    <property type="resolution" value="3.50 A"/>
    <property type="chains" value="Q/q=1-199"/>
</dbReference>
<dbReference type="PDB" id="5VFP">
    <property type="method" value="EM"/>
    <property type="resolution" value="4.20 A"/>
    <property type="chains" value="Q/q=1-199"/>
</dbReference>
<dbReference type="PDB" id="5VFQ">
    <property type="method" value="EM"/>
    <property type="resolution" value="4.20 A"/>
    <property type="chains" value="Q/q=1-199"/>
</dbReference>
<dbReference type="PDB" id="5VFR">
    <property type="method" value="EM"/>
    <property type="resolution" value="4.90 A"/>
    <property type="chains" value="Q/q=1-199"/>
</dbReference>
<dbReference type="PDB" id="5VFS">
    <property type="method" value="EM"/>
    <property type="resolution" value="3.60 A"/>
    <property type="chains" value="Q/q=1-199"/>
</dbReference>
<dbReference type="PDB" id="5VFT">
    <property type="method" value="EM"/>
    <property type="resolution" value="7.00 A"/>
    <property type="chains" value="Q/q=1-199"/>
</dbReference>
<dbReference type="PDB" id="5VFU">
    <property type="method" value="EM"/>
    <property type="resolution" value="5.80 A"/>
    <property type="chains" value="Q/q=1-199"/>
</dbReference>
<dbReference type="PDB" id="6AVO">
    <property type="method" value="EM"/>
    <property type="resolution" value="3.80 A"/>
    <property type="chains" value="T/V=1-201"/>
</dbReference>
<dbReference type="PDB" id="6E5B">
    <property type="method" value="X-ray"/>
    <property type="resolution" value="2.77 A"/>
    <property type="chains" value="J/X=1-201"/>
</dbReference>
<dbReference type="PDB" id="6KWY">
    <property type="method" value="EM"/>
    <property type="resolution" value="2.72 A"/>
    <property type="chains" value="J/X=1-201"/>
</dbReference>
<dbReference type="PDB" id="6MSB">
    <property type="method" value="EM"/>
    <property type="resolution" value="3.00 A"/>
    <property type="chains" value="Q/q=1-201"/>
</dbReference>
<dbReference type="PDB" id="6MSD">
    <property type="method" value="EM"/>
    <property type="resolution" value="3.20 A"/>
    <property type="chains" value="Q/q=1-201"/>
</dbReference>
<dbReference type="PDB" id="6MSE">
    <property type="method" value="EM"/>
    <property type="resolution" value="3.30 A"/>
    <property type="chains" value="e=105-134"/>
</dbReference>
<dbReference type="PDB" id="6MSG">
    <property type="method" value="EM"/>
    <property type="resolution" value="3.50 A"/>
    <property type="chains" value="Q/q=1-201"/>
</dbReference>
<dbReference type="PDB" id="6MSH">
    <property type="method" value="EM"/>
    <property type="resolution" value="3.60 A"/>
    <property type="chains" value="Q/q=1-201"/>
</dbReference>
<dbReference type="PDB" id="6MSJ">
    <property type="method" value="EM"/>
    <property type="resolution" value="3.30 A"/>
    <property type="chains" value="Q/q=1-201"/>
</dbReference>
<dbReference type="PDB" id="6MSK">
    <property type="method" value="EM"/>
    <property type="resolution" value="3.20 A"/>
    <property type="chains" value="Q/q=1-201"/>
</dbReference>
<dbReference type="PDB" id="6R70">
    <property type="method" value="EM"/>
    <property type="resolution" value="3.50 A"/>
    <property type="chains" value="J/X=1-196"/>
</dbReference>
<dbReference type="PDB" id="6REY">
    <property type="method" value="EM"/>
    <property type="resolution" value="3.00 A"/>
    <property type="chains" value="K/Y=1-201"/>
</dbReference>
<dbReference type="PDB" id="6RGQ">
    <property type="method" value="EM"/>
    <property type="resolution" value="2.60 A"/>
    <property type="chains" value="K/Y=1-201"/>
</dbReference>
<dbReference type="PDB" id="6WJD">
    <property type="method" value="EM"/>
    <property type="resolution" value="4.80 A"/>
    <property type="chains" value="Q/q=1-201"/>
</dbReference>
<dbReference type="PDB" id="6WJN">
    <property type="method" value="EM"/>
    <property type="resolution" value="5.70 A"/>
    <property type="chains" value="Q/q=1-199"/>
</dbReference>
<dbReference type="PDB" id="6XMJ">
    <property type="method" value="EM"/>
    <property type="resolution" value="3.00 A"/>
    <property type="chains" value="K=1-199"/>
</dbReference>
<dbReference type="PDB" id="7AWE">
    <property type="method" value="X-ray"/>
    <property type="resolution" value="2.29 A"/>
    <property type="chains" value="K/Y=1-197"/>
</dbReference>
<dbReference type="PDB" id="7B12">
    <property type="method" value="X-ray"/>
    <property type="resolution" value="2.43 A"/>
    <property type="chains" value="K/Y=1-197"/>
</dbReference>
<dbReference type="PDB" id="7LXV">
    <property type="method" value="EM"/>
    <property type="resolution" value="3.40 A"/>
    <property type="chains" value="J/X=1-201"/>
</dbReference>
<dbReference type="PDB" id="7NAN">
    <property type="method" value="EM"/>
    <property type="resolution" value="2.80 A"/>
    <property type="chains" value="J/X=1-201"/>
</dbReference>
<dbReference type="PDB" id="7NAO">
    <property type="method" value="EM"/>
    <property type="resolution" value="2.90 A"/>
    <property type="chains" value="J/X=1-201"/>
</dbReference>
<dbReference type="PDB" id="7NAP">
    <property type="method" value="EM"/>
    <property type="resolution" value="3.20 A"/>
    <property type="chains" value="J/X=1-201"/>
</dbReference>
<dbReference type="PDB" id="7NAQ">
    <property type="method" value="EM"/>
    <property type="resolution" value="3.20 A"/>
    <property type="chains" value="J/X=1-201"/>
</dbReference>
<dbReference type="PDB" id="7NHT">
    <property type="method" value="EM"/>
    <property type="resolution" value="2.80 A"/>
    <property type="chains" value="J=1-201"/>
</dbReference>
<dbReference type="PDB" id="7PG9">
    <property type="method" value="EM"/>
    <property type="resolution" value="3.70 A"/>
    <property type="chains" value="K/Y=1-201"/>
</dbReference>
<dbReference type="PDB" id="7QXN">
    <property type="method" value="EM"/>
    <property type="resolution" value="3.70 A"/>
    <property type="chains" value="Q/q=1-201"/>
</dbReference>
<dbReference type="PDB" id="7QXP">
    <property type="method" value="EM"/>
    <property type="resolution" value="3.60 A"/>
    <property type="chains" value="Q/q=1-201"/>
</dbReference>
<dbReference type="PDB" id="7QXU">
    <property type="method" value="EM"/>
    <property type="resolution" value="4.30 A"/>
    <property type="chains" value="Q/q=1-201"/>
</dbReference>
<dbReference type="PDB" id="7QXW">
    <property type="method" value="EM"/>
    <property type="resolution" value="4.10 A"/>
    <property type="chains" value="Q/q=1-201"/>
</dbReference>
<dbReference type="PDB" id="7QXX">
    <property type="method" value="EM"/>
    <property type="resolution" value="4.40 A"/>
    <property type="chains" value="Q/q=1-201"/>
</dbReference>
<dbReference type="PDB" id="7QY7">
    <property type="method" value="EM"/>
    <property type="resolution" value="4.70 A"/>
    <property type="chains" value="Q/q=1-201"/>
</dbReference>
<dbReference type="PDB" id="7QYA">
    <property type="method" value="EM"/>
    <property type="resolution" value="4.80 A"/>
    <property type="chains" value="Q/q=1-201"/>
</dbReference>
<dbReference type="PDB" id="7QYB">
    <property type="method" value="EM"/>
    <property type="resolution" value="4.10 A"/>
    <property type="chains" value="Q/q=1-201"/>
</dbReference>
<dbReference type="PDB" id="7V5G">
    <property type="method" value="EM"/>
    <property type="resolution" value="4.47 A"/>
    <property type="chains" value="D/K=1-201"/>
</dbReference>
<dbReference type="PDB" id="7V5M">
    <property type="method" value="EM"/>
    <property type="resolution" value="3.88 A"/>
    <property type="chains" value="K/Y=1-201"/>
</dbReference>
<dbReference type="PDB" id="7W37">
    <property type="method" value="EM"/>
    <property type="resolution" value="3.00 A"/>
    <property type="chains" value="Q/q=1-201"/>
</dbReference>
<dbReference type="PDB" id="7W38">
    <property type="method" value="EM"/>
    <property type="resolution" value="3.10 A"/>
    <property type="chains" value="Q/q=1-201"/>
</dbReference>
<dbReference type="PDB" id="7W39">
    <property type="method" value="EM"/>
    <property type="resolution" value="3.20 A"/>
    <property type="chains" value="Q/q=1-201"/>
</dbReference>
<dbReference type="PDB" id="7W3A">
    <property type="method" value="EM"/>
    <property type="resolution" value="3.50 A"/>
    <property type="chains" value="Q/q=1-201"/>
</dbReference>
<dbReference type="PDB" id="7W3B">
    <property type="method" value="EM"/>
    <property type="resolution" value="3.60 A"/>
    <property type="chains" value="Q/q=1-201"/>
</dbReference>
<dbReference type="PDB" id="7W3C">
    <property type="method" value="EM"/>
    <property type="resolution" value="3.40 A"/>
    <property type="chains" value="Q/q=1-201"/>
</dbReference>
<dbReference type="PDB" id="7W3F">
    <property type="method" value="EM"/>
    <property type="resolution" value="3.30 A"/>
    <property type="chains" value="Q/q=1-201"/>
</dbReference>
<dbReference type="PDB" id="7W3G">
    <property type="method" value="EM"/>
    <property type="resolution" value="3.20 A"/>
    <property type="chains" value="Q/q=1-201"/>
</dbReference>
<dbReference type="PDB" id="7W3H">
    <property type="method" value="EM"/>
    <property type="resolution" value="3.20 A"/>
    <property type="chains" value="Q/q=1-201"/>
</dbReference>
<dbReference type="PDB" id="7W3I">
    <property type="method" value="EM"/>
    <property type="resolution" value="3.50 A"/>
    <property type="chains" value="Q/q=1-201"/>
</dbReference>
<dbReference type="PDB" id="7W3J">
    <property type="method" value="EM"/>
    <property type="resolution" value="3.50 A"/>
    <property type="chains" value="Q/q=1-201"/>
</dbReference>
<dbReference type="PDB" id="7W3K">
    <property type="method" value="EM"/>
    <property type="resolution" value="3.60 A"/>
    <property type="chains" value="Q/q=1-201"/>
</dbReference>
<dbReference type="PDB" id="7W3M">
    <property type="method" value="EM"/>
    <property type="resolution" value="3.50 A"/>
    <property type="chains" value="Q/q=1-201"/>
</dbReference>
<dbReference type="PDB" id="8BZL">
    <property type="method" value="X-ray"/>
    <property type="resolution" value="2.14 A"/>
    <property type="chains" value="J/X=1-201"/>
</dbReference>
<dbReference type="PDB" id="8CVR">
    <property type="method" value="EM"/>
    <property type="resolution" value="2.70 A"/>
    <property type="chains" value="K/Y=1-201"/>
</dbReference>
<dbReference type="PDB" id="8CVS">
    <property type="method" value="EM"/>
    <property type="resolution" value="3.10 A"/>
    <property type="chains" value="J/X=1-201"/>
</dbReference>
<dbReference type="PDB" id="8CVT">
    <property type="method" value="EM"/>
    <property type="resolution" value="3.00 A"/>
    <property type="chains" value="Q/q=1-201"/>
</dbReference>
<dbReference type="PDB" id="8CXB">
    <property type="method" value="EM"/>
    <property type="resolution" value="2.90 A"/>
    <property type="chains" value="J/X=1-201"/>
</dbReference>
<dbReference type="PDB" id="8QYM">
    <property type="method" value="EM"/>
    <property type="resolution" value="2.73 A"/>
    <property type="chains" value="M=1-201"/>
</dbReference>
<dbReference type="PDB" id="8QYN">
    <property type="method" value="EM"/>
    <property type="resolution" value="2.88 A"/>
    <property type="chains" value="M=1-201"/>
</dbReference>
<dbReference type="PDB" id="8QYO">
    <property type="method" value="EM"/>
    <property type="resolution" value="2.84 A"/>
    <property type="chains" value="J/X=1-201"/>
</dbReference>
<dbReference type="PDB" id="8QYS">
    <property type="method" value="EM"/>
    <property type="resolution" value="3.89 A"/>
    <property type="chains" value="M/d=1-197"/>
</dbReference>
<dbReference type="PDB" id="8QZ9">
    <property type="method" value="EM"/>
    <property type="resolution" value="2.95 A"/>
    <property type="chains" value="M=1-201"/>
</dbReference>
<dbReference type="PDB" id="8TM4">
    <property type="method" value="EM"/>
    <property type="resolution" value="3.00 A"/>
    <property type="chains" value="J=1-201"/>
</dbReference>
<dbReference type="PDB" id="8TM5">
    <property type="method" value="EM"/>
    <property type="resolution" value="3.00 A"/>
    <property type="chains" value="J=1-201"/>
</dbReference>
<dbReference type="PDB" id="8TM6">
    <property type="method" value="EM"/>
    <property type="resolution" value="2.80 A"/>
    <property type="chains" value="J/X=1-201"/>
</dbReference>
<dbReference type="PDB" id="8UD9">
    <property type="method" value="EM"/>
    <property type="resolution" value="2.04 A"/>
    <property type="chains" value="K/Y=1-201"/>
</dbReference>
<dbReference type="PDB" id="8YIX">
    <property type="method" value="EM"/>
    <property type="resolution" value="2.91 A"/>
    <property type="chains" value="J=1-201"/>
</dbReference>
<dbReference type="PDB" id="8YIY">
    <property type="method" value="EM"/>
    <property type="resolution" value="3.41 A"/>
    <property type="chains" value="J/X=1-201"/>
</dbReference>
<dbReference type="PDB" id="8YIZ">
    <property type="method" value="EM"/>
    <property type="resolution" value="3.79 A"/>
    <property type="chains" value="J/X=1-201"/>
</dbReference>
<dbReference type="PDB" id="9E8G">
    <property type="method" value="EM"/>
    <property type="resolution" value="3.01 A"/>
    <property type="chains" value="R=1-201"/>
</dbReference>
<dbReference type="PDB" id="9E8O">
    <property type="method" value="EM"/>
    <property type="resolution" value="3.10 A"/>
    <property type="chains" value="Q=1-201"/>
</dbReference>
<dbReference type="PDB" id="9E8Q">
    <property type="method" value="EM"/>
    <property type="resolution" value="3.16 A"/>
    <property type="chains" value="Q=1-201"/>
</dbReference>
<dbReference type="PDB" id="9HMN">
    <property type="method" value="EM"/>
    <property type="resolution" value="2.55 A"/>
    <property type="chains" value="K/V=1-201"/>
</dbReference>
<dbReference type="PDBsum" id="4R3O"/>
<dbReference type="PDBsum" id="4R67"/>
<dbReference type="PDBsum" id="5A0Q"/>
<dbReference type="PDBsum" id="5GJQ"/>
<dbReference type="PDBsum" id="5GJR"/>
<dbReference type="PDBsum" id="5L4G"/>
<dbReference type="PDBsum" id="5LE5"/>
<dbReference type="PDBsum" id="5LEX"/>
<dbReference type="PDBsum" id="5LEY"/>
<dbReference type="PDBsum" id="5LEZ"/>
<dbReference type="PDBsum" id="5LF0"/>
<dbReference type="PDBsum" id="5LF1"/>
<dbReference type="PDBsum" id="5LF3"/>
<dbReference type="PDBsum" id="5LF4"/>
<dbReference type="PDBsum" id="5LF6"/>
<dbReference type="PDBsum" id="5LF7"/>
<dbReference type="PDBsum" id="5LN3"/>
<dbReference type="PDBsum" id="5M32"/>
<dbReference type="PDBsum" id="5T0C"/>
<dbReference type="PDBsum" id="5T0G"/>
<dbReference type="PDBsum" id="5T0H"/>
<dbReference type="PDBsum" id="5T0I"/>
<dbReference type="PDBsum" id="5T0J"/>
<dbReference type="PDBsum" id="5VFO"/>
<dbReference type="PDBsum" id="5VFP"/>
<dbReference type="PDBsum" id="5VFQ"/>
<dbReference type="PDBsum" id="5VFR"/>
<dbReference type="PDBsum" id="5VFS"/>
<dbReference type="PDBsum" id="5VFT"/>
<dbReference type="PDBsum" id="5VFU"/>
<dbReference type="PDBsum" id="6AVO"/>
<dbReference type="PDBsum" id="6E5B"/>
<dbReference type="PDBsum" id="6KWY"/>
<dbReference type="PDBsum" id="6MSB"/>
<dbReference type="PDBsum" id="6MSD"/>
<dbReference type="PDBsum" id="6MSE"/>
<dbReference type="PDBsum" id="6MSG"/>
<dbReference type="PDBsum" id="6MSH"/>
<dbReference type="PDBsum" id="6MSJ"/>
<dbReference type="PDBsum" id="6MSK"/>
<dbReference type="PDBsum" id="6R70"/>
<dbReference type="PDBsum" id="6REY"/>
<dbReference type="PDBsum" id="6RGQ"/>
<dbReference type="PDBsum" id="6WJD"/>
<dbReference type="PDBsum" id="6WJN"/>
<dbReference type="PDBsum" id="6XMJ"/>
<dbReference type="PDBsum" id="7AWE"/>
<dbReference type="PDBsum" id="7B12"/>
<dbReference type="PDBsum" id="7LXV"/>
<dbReference type="PDBsum" id="7NAN"/>
<dbReference type="PDBsum" id="7NAO"/>
<dbReference type="PDBsum" id="7NAP"/>
<dbReference type="PDBsum" id="7NAQ"/>
<dbReference type="PDBsum" id="7NHT"/>
<dbReference type="PDBsum" id="7PG9"/>
<dbReference type="PDBsum" id="7QXN"/>
<dbReference type="PDBsum" id="7QXP"/>
<dbReference type="PDBsum" id="7QXU"/>
<dbReference type="PDBsum" id="7QXW"/>
<dbReference type="PDBsum" id="7QXX"/>
<dbReference type="PDBsum" id="7QY7"/>
<dbReference type="PDBsum" id="7QYA"/>
<dbReference type="PDBsum" id="7QYB"/>
<dbReference type="PDBsum" id="7V5G"/>
<dbReference type="PDBsum" id="7V5M"/>
<dbReference type="PDBsum" id="7W37"/>
<dbReference type="PDBsum" id="7W38"/>
<dbReference type="PDBsum" id="7W39"/>
<dbReference type="PDBsum" id="7W3A"/>
<dbReference type="PDBsum" id="7W3B"/>
<dbReference type="PDBsum" id="7W3C"/>
<dbReference type="PDBsum" id="7W3F"/>
<dbReference type="PDBsum" id="7W3G"/>
<dbReference type="PDBsum" id="7W3H"/>
<dbReference type="PDBsum" id="7W3I"/>
<dbReference type="PDBsum" id="7W3J"/>
<dbReference type="PDBsum" id="7W3K"/>
<dbReference type="PDBsum" id="7W3M"/>
<dbReference type="PDBsum" id="8BZL"/>
<dbReference type="PDBsum" id="8CVR"/>
<dbReference type="PDBsum" id="8CVS"/>
<dbReference type="PDBsum" id="8CVT"/>
<dbReference type="PDBsum" id="8CXB"/>
<dbReference type="PDBsum" id="8QYM"/>
<dbReference type="PDBsum" id="8QYN"/>
<dbReference type="PDBsum" id="8QYO"/>
<dbReference type="PDBsum" id="8QYS"/>
<dbReference type="PDBsum" id="8QZ9"/>
<dbReference type="PDBsum" id="8TM4"/>
<dbReference type="PDBsum" id="8TM5"/>
<dbReference type="PDBsum" id="8TM6"/>
<dbReference type="PDBsum" id="8UD9"/>
<dbReference type="PDBsum" id="8YIX"/>
<dbReference type="PDBsum" id="8YIY"/>
<dbReference type="PDBsum" id="8YIZ"/>
<dbReference type="PDBsum" id="9E8G"/>
<dbReference type="PDBsum" id="9E8O"/>
<dbReference type="PDBsum" id="9E8Q"/>
<dbReference type="PDBsum" id="9HMN"/>
<dbReference type="EMDB" id="EMD-0781"/>
<dbReference type="EMDB" id="EMD-12341"/>
<dbReference type="EMDB" id="EMD-13389"/>
<dbReference type="EMDB" id="EMD-14201"/>
<dbReference type="EMDB" id="EMD-14202"/>
<dbReference type="EMDB" id="EMD-14203"/>
<dbReference type="EMDB" id="EMD-14204"/>
<dbReference type="EMDB" id="EMD-14205"/>
<dbReference type="EMDB" id="EMD-14209"/>
<dbReference type="EMDB" id="EMD-14210"/>
<dbReference type="EMDB" id="EMD-14211"/>
<dbReference type="EMDB" id="EMD-18758"/>
<dbReference type="EMDB" id="EMD-18759"/>
<dbReference type="EMDB" id="EMD-18760"/>
<dbReference type="EMDB" id="EMD-18761"/>
<dbReference type="EMDB" id="EMD-18773"/>
<dbReference type="EMDB" id="EMD-21691"/>
<dbReference type="EMDB" id="EMD-21696"/>
<dbReference type="EMDB" id="EMD-22259"/>
<dbReference type="EMDB" id="EMD-23576"/>
<dbReference type="EMDB" id="EMD-24275"/>
<dbReference type="EMDB" id="EMD-24276"/>
<dbReference type="EMDB" id="EMD-24277"/>
<dbReference type="EMDB" id="EMD-24278"/>
<dbReference type="EMDB" id="EMD-27013"/>
<dbReference type="EMDB" id="EMD-27015"/>
<dbReference type="EMDB" id="EMD-27018"/>
<dbReference type="EMDB" id="EMD-2981"/>
<dbReference type="EMDB" id="EMD-31724"/>
<dbReference type="EMDB" id="EMD-31727"/>
<dbReference type="EMDB" id="EMD-32272"/>
<dbReference type="EMDB" id="EMD-32273"/>
<dbReference type="EMDB" id="EMD-32274"/>
<dbReference type="EMDB" id="EMD-32275"/>
<dbReference type="EMDB" id="EMD-32276"/>
<dbReference type="EMDB" id="EMD-32277"/>
<dbReference type="EMDB" id="EMD-32278"/>
<dbReference type="EMDB" id="EMD-32279"/>
<dbReference type="EMDB" id="EMD-32280"/>
<dbReference type="EMDB" id="EMD-32281"/>
<dbReference type="EMDB" id="EMD-32282"/>
<dbReference type="EMDB" id="EMD-32283"/>
<dbReference type="EMDB" id="EMD-32284"/>
<dbReference type="EMDB" id="EMD-39332"/>
<dbReference type="EMDB" id="EMD-39333"/>
<dbReference type="EMDB" id="EMD-39334"/>
<dbReference type="EMDB" id="EMD-4089"/>
<dbReference type="EMDB" id="EMD-41378"/>
<dbReference type="EMDB" id="EMD-41379"/>
<dbReference type="EMDB" id="EMD-41380"/>
<dbReference type="EMDB" id="EMD-4146"/>
<dbReference type="EMDB" id="EMD-42148"/>
<dbReference type="EMDB" id="EMD-4738"/>
<dbReference type="EMDB" id="EMD-47719"/>
<dbReference type="EMDB" id="EMD-47726"/>
<dbReference type="EMDB" id="EMD-47727"/>
<dbReference type="EMDB" id="EMD-4860"/>
<dbReference type="EMDB" id="EMD-4877"/>
<dbReference type="EMDB" id="EMD-52296"/>
<dbReference type="EMDB" id="EMD-60138"/>
<dbReference type="EMDB" id="EMD-60139"/>
<dbReference type="EMDB" id="EMD-7010"/>
<dbReference type="EMDB" id="EMD-8662"/>
<dbReference type="EMDB" id="EMD-8663"/>
<dbReference type="EMDB" id="EMD-8664"/>
<dbReference type="EMDB" id="EMD-8665"/>
<dbReference type="EMDB" id="EMD-8666"/>
<dbReference type="EMDB" id="EMD-8667"/>
<dbReference type="EMDB" id="EMD-8668"/>
<dbReference type="EMDB" id="EMD-9216"/>
<dbReference type="EMDB" id="EMD-9217"/>
<dbReference type="EMDB" id="EMD-9218"/>
<dbReference type="EMDB" id="EMD-9219"/>
<dbReference type="EMDB" id="EMD-9220"/>
<dbReference type="EMDB" id="EMD-9221"/>
<dbReference type="EMDB" id="EMD-9222"/>
<dbReference type="EMDB" id="EMD-9511"/>
<dbReference type="EMDB" id="EMD-9512"/>
<dbReference type="SMR" id="P49721"/>
<dbReference type="BioGRID" id="111663">
    <property type="interactions" value="225"/>
</dbReference>
<dbReference type="ComplexPortal" id="CPX-5993">
    <property type="entry name" value="26S proteasome complex"/>
</dbReference>
<dbReference type="ComplexPortal" id="CPX-8806">
    <property type="entry name" value="20S proteasome complex"/>
</dbReference>
<dbReference type="ComplexPortal" id="CPX-8841">
    <property type="entry name" value="PA200-20S single-capped proteasome"/>
</dbReference>
<dbReference type="ComplexPortal" id="CPX-8842">
    <property type="entry name" value="PA28-alphabeta double-capped 20S proteasome complex"/>
</dbReference>
<dbReference type="ComplexPortal" id="CPX-9001">
    <property type="entry name" value="PA28-gamma single-capped 20S proteasome complex"/>
</dbReference>
<dbReference type="ComplexPortal" id="CPX-9002">
    <property type="entry name" value="PA28-alphabeta single-capped 20S proteasome complex"/>
</dbReference>
<dbReference type="ComplexPortal" id="CPX-9003">
    <property type="entry name" value="20S immunoproteasome complex"/>
</dbReference>
<dbReference type="ComplexPortal" id="CPX-9004">
    <property type="entry name" value="20S thymoproteasome complex"/>
</dbReference>
<dbReference type="ComplexPortal" id="CPX-9021">
    <property type="entry name" value="20S spermatoproteasome complex"/>
</dbReference>
<dbReference type="ComplexPortal" id="CPX-9022">
    <property type="entry name" value="PA28-gamma double-capped 20S proteasome complex"/>
</dbReference>
<dbReference type="ComplexPortal" id="CPX-9063">
    <property type="entry name" value="PA200-20S-PA200 double-capped proteasome complex"/>
</dbReference>
<dbReference type="ComplexPortal" id="CPX-9082">
    <property type="entry name" value="19S-20S-PA28-alphabeta hybrid proteasome complex"/>
</dbReference>
<dbReference type="ComplexPortal" id="CPX-9085">
    <property type="entry name" value="19S-20S-PA28-gamma hybrid proteasome complex"/>
</dbReference>
<dbReference type="ComplexPortal" id="CPX-9086">
    <property type="entry name" value="30S proteasome complex"/>
</dbReference>
<dbReference type="CORUM" id="P49721"/>
<dbReference type="DIP" id="DIP-33848N"/>
<dbReference type="FunCoup" id="P49721">
    <property type="interactions" value="1555"/>
</dbReference>
<dbReference type="IntAct" id="P49721">
    <property type="interactions" value="116"/>
</dbReference>
<dbReference type="MINT" id="P49721"/>
<dbReference type="STRING" id="9606.ENSP00000362334"/>
<dbReference type="BindingDB" id="P49721"/>
<dbReference type="ChEMBL" id="CHEMBL3492"/>
<dbReference type="DrugBank" id="DB08515">
    <property type="generic name" value="(3AR,6R,6AS)-6-((S)-((S)-CYCLOHEX-2-ENYL)(HYDROXY)METHYL)-6A-METHYL-4-OXO-HEXAHYDRO-2H-FURO[3,2-C]PYRROLE-6-CARBALDEHYDE"/>
</dbReference>
<dbReference type="DrugBank" id="DB08889">
    <property type="generic name" value="Carfilzomib"/>
</dbReference>
<dbReference type="DrugCentral" id="P49721"/>
<dbReference type="GuidetoPHARMACOLOGY" id="2405"/>
<dbReference type="MEROPS" id="T01.984"/>
<dbReference type="GlyGen" id="P49721">
    <property type="glycosylation" value="2 sites, 1 N-linked glycan (1 site), 1 O-linked glycan (1 site)"/>
</dbReference>
<dbReference type="iPTMnet" id="P49721"/>
<dbReference type="MetOSite" id="P49721"/>
<dbReference type="PhosphoSitePlus" id="P49721"/>
<dbReference type="SwissPalm" id="P49721"/>
<dbReference type="BioMuta" id="PSMB2"/>
<dbReference type="DMDM" id="1709762"/>
<dbReference type="OGP" id="P49721"/>
<dbReference type="REPRODUCTION-2DPAGE" id="IPI00028006"/>
<dbReference type="REPRODUCTION-2DPAGE" id="P49721"/>
<dbReference type="jPOST" id="P49721"/>
<dbReference type="MassIVE" id="P49721"/>
<dbReference type="PaxDb" id="9606-ENSP00000362334"/>
<dbReference type="PeptideAtlas" id="P49721"/>
<dbReference type="ProteomicsDB" id="56057"/>
<dbReference type="Pumba" id="P49721"/>
<dbReference type="TopDownProteomics" id="P49721"/>
<dbReference type="Antibodypedia" id="17325">
    <property type="antibodies" value="266 antibodies from 33 providers"/>
</dbReference>
<dbReference type="DNASU" id="5690"/>
<dbReference type="Ensembl" id="ENST00000373237.4">
    <property type="protein sequence ID" value="ENSP00000362334.3"/>
    <property type="gene ID" value="ENSG00000126067.12"/>
</dbReference>
<dbReference type="GeneID" id="5690"/>
<dbReference type="KEGG" id="hsa:5690"/>
<dbReference type="MANE-Select" id="ENST00000373237.4">
    <property type="protein sequence ID" value="ENSP00000362334.3"/>
    <property type="RefSeq nucleotide sequence ID" value="NM_002794.5"/>
    <property type="RefSeq protein sequence ID" value="NP_002785.1"/>
</dbReference>
<dbReference type="UCSC" id="uc001bzf.4">
    <property type="organism name" value="human"/>
</dbReference>
<dbReference type="AGR" id="HGNC:9539"/>
<dbReference type="CTD" id="5690"/>
<dbReference type="DisGeNET" id="5690"/>
<dbReference type="GeneCards" id="PSMB2"/>
<dbReference type="HGNC" id="HGNC:9539">
    <property type="gene designation" value="PSMB2"/>
</dbReference>
<dbReference type="HPA" id="ENSG00000126067">
    <property type="expression patterns" value="Low tissue specificity"/>
</dbReference>
<dbReference type="MalaCards" id="PSMB2"/>
<dbReference type="MIM" id="602175">
    <property type="type" value="gene"/>
</dbReference>
<dbReference type="neXtProt" id="NX_P49721"/>
<dbReference type="OpenTargets" id="ENSG00000126067"/>
<dbReference type="PharmGKB" id="PA33884"/>
<dbReference type="VEuPathDB" id="HostDB:ENSG00000126067"/>
<dbReference type="eggNOG" id="KOG0177">
    <property type="taxonomic scope" value="Eukaryota"/>
</dbReference>
<dbReference type="GeneTree" id="ENSGT00640000091536"/>
<dbReference type="HOGENOM" id="CLU_035750_12_1_1"/>
<dbReference type="InParanoid" id="P49721"/>
<dbReference type="OMA" id="MKRDHDK"/>
<dbReference type="OrthoDB" id="268428at2759"/>
<dbReference type="PAN-GO" id="P49721">
    <property type="GO annotations" value="4 GO annotations based on evolutionary models"/>
</dbReference>
<dbReference type="PhylomeDB" id="P49721"/>
<dbReference type="TreeFam" id="TF106219"/>
<dbReference type="PathwayCommons" id="P49721"/>
<dbReference type="Reactome" id="R-HSA-1169091">
    <property type="pathway name" value="Activation of NF-kappaB in B cells"/>
</dbReference>
<dbReference type="Reactome" id="R-HSA-1234176">
    <property type="pathway name" value="Oxygen-dependent proline hydroxylation of Hypoxia-inducible Factor Alpha"/>
</dbReference>
<dbReference type="Reactome" id="R-HSA-1236974">
    <property type="pathway name" value="ER-Phagosome pathway"/>
</dbReference>
<dbReference type="Reactome" id="R-HSA-1236978">
    <property type="pathway name" value="Cross-presentation of soluble exogenous antigens (endosomes)"/>
</dbReference>
<dbReference type="Reactome" id="R-HSA-174084">
    <property type="pathway name" value="Autodegradation of Cdh1 by Cdh1:APC/C"/>
</dbReference>
<dbReference type="Reactome" id="R-HSA-174113">
    <property type="pathway name" value="SCF-beta-TrCP mediated degradation of Emi1"/>
</dbReference>
<dbReference type="Reactome" id="R-HSA-174154">
    <property type="pathway name" value="APC/C:Cdc20 mediated degradation of Securin"/>
</dbReference>
<dbReference type="Reactome" id="R-HSA-174178">
    <property type="pathway name" value="APC/C:Cdh1 mediated degradation of Cdc20 and other APC/C:Cdh1 targeted proteins in late mitosis/early G1"/>
</dbReference>
<dbReference type="Reactome" id="R-HSA-174184">
    <property type="pathway name" value="Cdc20:Phospho-APC/C mediated degradation of Cyclin A"/>
</dbReference>
<dbReference type="Reactome" id="R-HSA-180534">
    <property type="pathway name" value="Vpu mediated degradation of CD4"/>
</dbReference>
<dbReference type="Reactome" id="R-HSA-180585">
    <property type="pathway name" value="Vif-mediated degradation of APOBEC3G"/>
</dbReference>
<dbReference type="Reactome" id="R-HSA-187577">
    <property type="pathway name" value="SCF(Skp2)-mediated degradation of p27/p21"/>
</dbReference>
<dbReference type="Reactome" id="R-HSA-195253">
    <property type="pathway name" value="Degradation of beta-catenin by the destruction complex"/>
</dbReference>
<dbReference type="Reactome" id="R-HSA-202424">
    <property type="pathway name" value="Downstream TCR signaling"/>
</dbReference>
<dbReference type="Reactome" id="R-HSA-211733">
    <property type="pathway name" value="Regulation of activated PAK-2p34 by proteasome mediated degradation"/>
</dbReference>
<dbReference type="Reactome" id="R-HSA-2467813">
    <property type="pathway name" value="Separation of Sister Chromatids"/>
</dbReference>
<dbReference type="Reactome" id="R-HSA-2871837">
    <property type="pathway name" value="FCERI mediated NF-kB activation"/>
</dbReference>
<dbReference type="Reactome" id="R-HSA-349425">
    <property type="pathway name" value="Autodegradation of the E3 ubiquitin ligase COP1"/>
</dbReference>
<dbReference type="Reactome" id="R-HSA-350562">
    <property type="pathway name" value="Regulation of ornithine decarboxylase (ODC)"/>
</dbReference>
<dbReference type="Reactome" id="R-HSA-382556">
    <property type="pathway name" value="ABC-family proteins mediated transport"/>
</dbReference>
<dbReference type="Reactome" id="R-HSA-450408">
    <property type="pathway name" value="AUF1 (hnRNP D0) binds and destabilizes mRNA"/>
</dbReference>
<dbReference type="Reactome" id="R-HSA-4608870">
    <property type="pathway name" value="Asymmetric localization of PCP proteins"/>
</dbReference>
<dbReference type="Reactome" id="R-HSA-4641257">
    <property type="pathway name" value="Degradation of AXIN"/>
</dbReference>
<dbReference type="Reactome" id="R-HSA-4641258">
    <property type="pathway name" value="Degradation of DVL"/>
</dbReference>
<dbReference type="Reactome" id="R-HSA-5358346">
    <property type="pathway name" value="Hedgehog ligand biogenesis"/>
</dbReference>
<dbReference type="Reactome" id="R-HSA-5362768">
    <property type="pathway name" value="Hh mutants are degraded by ERAD"/>
</dbReference>
<dbReference type="Reactome" id="R-HSA-5607761">
    <property type="pathway name" value="Dectin-1 mediated noncanonical NF-kB signaling"/>
</dbReference>
<dbReference type="Reactome" id="R-HSA-5607764">
    <property type="pathway name" value="CLEC7A (Dectin-1) signaling"/>
</dbReference>
<dbReference type="Reactome" id="R-HSA-5610780">
    <property type="pathway name" value="Degradation of GLI1 by the proteasome"/>
</dbReference>
<dbReference type="Reactome" id="R-HSA-5610783">
    <property type="pathway name" value="Degradation of GLI2 by the proteasome"/>
</dbReference>
<dbReference type="Reactome" id="R-HSA-5610785">
    <property type="pathway name" value="GLI3 is processed to GLI3R by the proteasome"/>
</dbReference>
<dbReference type="Reactome" id="R-HSA-5632684">
    <property type="pathway name" value="Hedgehog 'on' state"/>
</dbReference>
<dbReference type="Reactome" id="R-HSA-5658442">
    <property type="pathway name" value="Regulation of RAS by GAPs"/>
</dbReference>
<dbReference type="Reactome" id="R-HSA-5668541">
    <property type="pathway name" value="TNFR2 non-canonical NF-kB pathway"/>
</dbReference>
<dbReference type="Reactome" id="R-HSA-5676590">
    <property type="pathway name" value="NIK--&gt;noncanonical NF-kB signaling"/>
</dbReference>
<dbReference type="Reactome" id="R-HSA-5678895">
    <property type="pathway name" value="Defective CFTR causes cystic fibrosis"/>
</dbReference>
<dbReference type="Reactome" id="R-HSA-5687128">
    <property type="pathway name" value="MAPK6/MAPK4 signaling"/>
</dbReference>
<dbReference type="Reactome" id="R-HSA-5689603">
    <property type="pathway name" value="UCH proteinases"/>
</dbReference>
<dbReference type="Reactome" id="R-HSA-5689880">
    <property type="pathway name" value="Ub-specific processing proteases"/>
</dbReference>
<dbReference type="Reactome" id="R-HSA-68867">
    <property type="pathway name" value="Assembly of the pre-replicative complex"/>
</dbReference>
<dbReference type="Reactome" id="R-HSA-68949">
    <property type="pathway name" value="Orc1 removal from chromatin"/>
</dbReference>
<dbReference type="Reactome" id="R-HSA-69017">
    <property type="pathway name" value="CDK-mediated phosphorylation and removal of Cdc6"/>
</dbReference>
<dbReference type="Reactome" id="R-HSA-69481">
    <property type="pathway name" value="G2/M Checkpoints"/>
</dbReference>
<dbReference type="Reactome" id="R-HSA-69601">
    <property type="pathway name" value="Ubiquitin Mediated Degradation of Phosphorylated Cdc25A"/>
</dbReference>
<dbReference type="Reactome" id="R-HSA-75815">
    <property type="pathway name" value="Ubiquitin-dependent degradation of Cyclin D"/>
</dbReference>
<dbReference type="Reactome" id="R-HSA-8852276">
    <property type="pathway name" value="The role of GTSE1 in G2/M progression after G2 checkpoint"/>
</dbReference>
<dbReference type="Reactome" id="R-HSA-8854050">
    <property type="pathway name" value="FBXL7 down-regulates AURKA during mitotic entry and in early mitosis"/>
</dbReference>
<dbReference type="Reactome" id="R-HSA-8939236">
    <property type="pathway name" value="RUNX1 regulates transcription of genes involved in differentiation of HSCs"/>
</dbReference>
<dbReference type="Reactome" id="R-HSA-8939902">
    <property type="pathway name" value="Regulation of RUNX2 expression and activity"/>
</dbReference>
<dbReference type="Reactome" id="R-HSA-8941858">
    <property type="pathway name" value="Regulation of RUNX3 expression and activity"/>
</dbReference>
<dbReference type="Reactome" id="R-HSA-8948751">
    <property type="pathway name" value="Regulation of PTEN stability and activity"/>
</dbReference>
<dbReference type="Reactome" id="R-HSA-8951664">
    <property type="pathway name" value="Neddylation"/>
</dbReference>
<dbReference type="Reactome" id="R-HSA-9010553">
    <property type="pathway name" value="Regulation of expression of SLITs and ROBOs"/>
</dbReference>
<dbReference type="Reactome" id="R-HSA-9020702">
    <property type="pathway name" value="Interleukin-1 signaling"/>
</dbReference>
<dbReference type="Reactome" id="R-HSA-9604323">
    <property type="pathway name" value="Negative regulation of NOTCH4 signaling"/>
</dbReference>
<dbReference type="Reactome" id="R-HSA-9755511">
    <property type="pathway name" value="KEAP1-NFE2L2 pathway"/>
</dbReference>
<dbReference type="Reactome" id="R-HSA-9762114">
    <property type="pathway name" value="GSK3B and BTRC:CUL1-mediated-degradation of NFE2L2"/>
</dbReference>
<dbReference type="Reactome" id="R-HSA-9824272">
    <property type="pathway name" value="Somitogenesis"/>
</dbReference>
<dbReference type="Reactome" id="R-HSA-983168">
    <property type="pathway name" value="Antigen processing: Ubiquitination &amp; Proteasome degradation"/>
</dbReference>
<dbReference type="Reactome" id="R-HSA-9907900">
    <property type="pathway name" value="Proteasome assembly"/>
</dbReference>
<dbReference type="SignaLink" id="P49721"/>
<dbReference type="SIGNOR" id="P49721"/>
<dbReference type="BioGRID-ORCS" id="5690">
    <property type="hits" value="839 hits in 1151 CRISPR screens"/>
</dbReference>
<dbReference type="CD-CODE" id="550E224B">
    <property type="entry name" value="Proteasome condensate"/>
</dbReference>
<dbReference type="CD-CODE" id="91857CE7">
    <property type="entry name" value="Nucleolus"/>
</dbReference>
<dbReference type="ChiTaRS" id="PSMB2">
    <property type="organism name" value="human"/>
</dbReference>
<dbReference type="EvolutionaryTrace" id="P49721"/>
<dbReference type="GeneWiki" id="PSMB2"/>
<dbReference type="GenomeRNAi" id="5690"/>
<dbReference type="Pharos" id="P49721">
    <property type="development level" value="Tclin"/>
</dbReference>
<dbReference type="PRO" id="PR:P49721"/>
<dbReference type="Proteomes" id="UP000005640">
    <property type="component" value="Chromosome 1"/>
</dbReference>
<dbReference type="RNAct" id="P49721">
    <property type="molecule type" value="protein"/>
</dbReference>
<dbReference type="Bgee" id="ENSG00000126067">
    <property type="expression patterns" value="Expressed in ileal mucosa and 220 other cell types or tissues"/>
</dbReference>
<dbReference type="ExpressionAtlas" id="P49721">
    <property type="expression patterns" value="baseline and differential"/>
</dbReference>
<dbReference type="GO" id="GO:0005737">
    <property type="term" value="C:cytoplasm"/>
    <property type="evidence" value="ECO:0000314"/>
    <property type="project" value="UniProtKB"/>
</dbReference>
<dbReference type="GO" id="GO:0005829">
    <property type="term" value="C:cytosol"/>
    <property type="evidence" value="ECO:0000318"/>
    <property type="project" value="GO_Central"/>
</dbReference>
<dbReference type="GO" id="GO:0070062">
    <property type="term" value="C:extracellular exosome"/>
    <property type="evidence" value="ECO:0007005"/>
    <property type="project" value="UniProtKB"/>
</dbReference>
<dbReference type="GO" id="GO:0016020">
    <property type="term" value="C:membrane"/>
    <property type="evidence" value="ECO:0007005"/>
    <property type="project" value="UniProtKB"/>
</dbReference>
<dbReference type="GO" id="GO:0005654">
    <property type="term" value="C:nucleoplasm"/>
    <property type="evidence" value="ECO:0000314"/>
    <property type="project" value="HPA"/>
</dbReference>
<dbReference type="GO" id="GO:0005634">
    <property type="term" value="C:nucleus"/>
    <property type="evidence" value="ECO:0000314"/>
    <property type="project" value="UniProtKB"/>
</dbReference>
<dbReference type="GO" id="GO:0000502">
    <property type="term" value="C:proteasome complex"/>
    <property type="evidence" value="ECO:0000314"/>
    <property type="project" value="UniProtKB"/>
</dbReference>
<dbReference type="GO" id="GO:0005839">
    <property type="term" value="C:proteasome core complex"/>
    <property type="evidence" value="ECO:0000314"/>
    <property type="project" value="UniProtKB"/>
</dbReference>
<dbReference type="GO" id="GO:0019774">
    <property type="term" value="C:proteasome core complex, beta-subunit complex"/>
    <property type="evidence" value="ECO:0000250"/>
    <property type="project" value="UniProtKB"/>
</dbReference>
<dbReference type="GO" id="GO:0043161">
    <property type="term" value="P:proteasome-mediated ubiquitin-dependent protein catabolic process"/>
    <property type="evidence" value="ECO:0000318"/>
    <property type="project" value="GO_Central"/>
</dbReference>
<dbReference type="CDD" id="cd03758">
    <property type="entry name" value="proteasome_beta_type_2"/>
    <property type="match status" value="1"/>
</dbReference>
<dbReference type="FunFam" id="3.60.20.10:FF:000008">
    <property type="entry name" value="Proteasome subunit beta type-4"/>
    <property type="match status" value="1"/>
</dbReference>
<dbReference type="Gene3D" id="3.60.20.10">
    <property type="entry name" value="Glutamine Phosphoribosylpyrophosphate, subunit 1, domain 1"/>
    <property type="match status" value="1"/>
</dbReference>
<dbReference type="InterPro" id="IPR029055">
    <property type="entry name" value="Ntn_hydrolases_N"/>
</dbReference>
<dbReference type="InterPro" id="IPR035206">
    <property type="entry name" value="Proteasome_beta2"/>
</dbReference>
<dbReference type="InterPro" id="IPR016050">
    <property type="entry name" value="Proteasome_bsu_CS"/>
</dbReference>
<dbReference type="InterPro" id="IPR001353">
    <property type="entry name" value="Proteasome_sua/b"/>
</dbReference>
<dbReference type="InterPro" id="IPR023333">
    <property type="entry name" value="Proteasome_suB-type"/>
</dbReference>
<dbReference type="PANTHER" id="PTHR32194">
    <property type="entry name" value="METALLOPROTEASE TLDD"/>
    <property type="match status" value="1"/>
</dbReference>
<dbReference type="PANTHER" id="PTHR32194:SF2">
    <property type="entry name" value="PROTEASOME SUBUNIT BETA TYPE-1"/>
    <property type="match status" value="1"/>
</dbReference>
<dbReference type="Pfam" id="PF00227">
    <property type="entry name" value="Proteasome"/>
    <property type="match status" value="1"/>
</dbReference>
<dbReference type="SUPFAM" id="SSF56235">
    <property type="entry name" value="N-terminal nucleophile aminohydrolases (Ntn hydrolases)"/>
    <property type="match status" value="1"/>
</dbReference>
<dbReference type="PROSITE" id="PS00854">
    <property type="entry name" value="PROTEASOME_BETA_1"/>
    <property type="match status" value="1"/>
</dbReference>
<dbReference type="PROSITE" id="PS51476">
    <property type="entry name" value="PROTEASOME_BETA_2"/>
    <property type="match status" value="1"/>
</dbReference>
<name>PSB2_HUMAN</name>
<accession>P49721</accession>
<accession>D3DPS0</accession>
<accession>P31145</accession>
<accession>Q9BWZ9</accession>
<keyword id="KW-0002">3D-structure</keyword>
<keyword id="KW-0007">Acetylation</keyword>
<keyword id="KW-0963">Cytoplasm</keyword>
<keyword id="KW-0903">Direct protein sequencing</keyword>
<keyword id="KW-0945">Host-virus interaction</keyword>
<keyword id="KW-0539">Nucleus</keyword>
<keyword id="KW-0647">Proteasome</keyword>
<keyword id="KW-1267">Proteomics identification</keyword>
<keyword id="KW-1185">Reference proteome</keyword>